<comment type="function">
    <text evidence="1">Binds together with bS18 to 16S ribosomal RNA.</text>
</comment>
<comment type="similarity">
    <text evidence="1">Belongs to the bacterial ribosomal protein bS6 family.</text>
</comment>
<organism>
    <name type="scientific">Exiguobacterium sibiricum (strain DSM 17290 / CCUG 55495 / CIP 109462 / JCM 13490 / 255-15)</name>
    <dbReference type="NCBI Taxonomy" id="262543"/>
    <lineage>
        <taxon>Bacteria</taxon>
        <taxon>Bacillati</taxon>
        <taxon>Bacillota</taxon>
        <taxon>Bacilli</taxon>
        <taxon>Bacillales</taxon>
        <taxon>Bacillales Family XII. Incertae Sedis</taxon>
        <taxon>Exiguobacterium</taxon>
    </lineage>
</organism>
<protein>
    <recommendedName>
        <fullName evidence="1">Small ribosomal subunit protein bS6</fullName>
    </recommendedName>
    <alternativeName>
        <fullName evidence="2">30S ribosomal protein S6</fullName>
    </alternativeName>
</protein>
<evidence type="ECO:0000255" key="1">
    <source>
        <dbReference type="HAMAP-Rule" id="MF_00360"/>
    </source>
</evidence>
<evidence type="ECO:0000305" key="2"/>
<dbReference type="EMBL" id="CP001022">
    <property type="protein sequence ID" value="ACB62483.1"/>
    <property type="molecule type" value="Genomic_DNA"/>
</dbReference>
<dbReference type="RefSeq" id="WP_012371898.1">
    <property type="nucleotide sequence ID" value="NC_010556.1"/>
</dbReference>
<dbReference type="SMR" id="B1YG99"/>
<dbReference type="STRING" id="262543.Exig_3038"/>
<dbReference type="KEGG" id="esi:Exig_3038"/>
<dbReference type="eggNOG" id="COG0360">
    <property type="taxonomic scope" value="Bacteria"/>
</dbReference>
<dbReference type="HOGENOM" id="CLU_113441_5_3_9"/>
<dbReference type="OrthoDB" id="9812702at2"/>
<dbReference type="Proteomes" id="UP000001681">
    <property type="component" value="Chromosome"/>
</dbReference>
<dbReference type="GO" id="GO:0005737">
    <property type="term" value="C:cytoplasm"/>
    <property type="evidence" value="ECO:0007669"/>
    <property type="project" value="UniProtKB-ARBA"/>
</dbReference>
<dbReference type="GO" id="GO:1990904">
    <property type="term" value="C:ribonucleoprotein complex"/>
    <property type="evidence" value="ECO:0007669"/>
    <property type="project" value="UniProtKB-KW"/>
</dbReference>
<dbReference type="GO" id="GO:0005840">
    <property type="term" value="C:ribosome"/>
    <property type="evidence" value="ECO:0007669"/>
    <property type="project" value="UniProtKB-KW"/>
</dbReference>
<dbReference type="GO" id="GO:0070181">
    <property type="term" value="F:small ribosomal subunit rRNA binding"/>
    <property type="evidence" value="ECO:0007669"/>
    <property type="project" value="TreeGrafter"/>
</dbReference>
<dbReference type="GO" id="GO:0003735">
    <property type="term" value="F:structural constituent of ribosome"/>
    <property type="evidence" value="ECO:0007669"/>
    <property type="project" value="InterPro"/>
</dbReference>
<dbReference type="GO" id="GO:0006412">
    <property type="term" value="P:translation"/>
    <property type="evidence" value="ECO:0007669"/>
    <property type="project" value="UniProtKB-UniRule"/>
</dbReference>
<dbReference type="CDD" id="cd00473">
    <property type="entry name" value="bS6"/>
    <property type="match status" value="1"/>
</dbReference>
<dbReference type="FunFam" id="3.30.70.60:FF:000002">
    <property type="entry name" value="30S ribosomal protein S6"/>
    <property type="match status" value="1"/>
</dbReference>
<dbReference type="Gene3D" id="3.30.70.60">
    <property type="match status" value="1"/>
</dbReference>
<dbReference type="HAMAP" id="MF_00360">
    <property type="entry name" value="Ribosomal_bS6"/>
    <property type="match status" value="1"/>
</dbReference>
<dbReference type="InterPro" id="IPR000529">
    <property type="entry name" value="Ribosomal_bS6"/>
</dbReference>
<dbReference type="InterPro" id="IPR035980">
    <property type="entry name" value="Ribosomal_bS6_sf"/>
</dbReference>
<dbReference type="InterPro" id="IPR020814">
    <property type="entry name" value="Ribosomal_S6_plastid/chlpt"/>
</dbReference>
<dbReference type="InterPro" id="IPR014717">
    <property type="entry name" value="Transl_elong_EF1B/ribsomal_bS6"/>
</dbReference>
<dbReference type="NCBIfam" id="TIGR00166">
    <property type="entry name" value="S6"/>
    <property type="match status" value="1"/>
</dbReference>
<dbReference type="PANTHER" id="PTHR21011">
    <property type="entry name" value="MITOCHONDRIAL 28S RIBOSOMAL PROTEIN S6"/>
    <property type="match status" value="1"/>
</dbReference>
<dbReference type="PANTHER" id="PTHR21011:SF1">
    <property type="entry name" value="SMALL RIBOSOMAL SUBUNIT PROTEIN BS6M"/>
    <property type="match status" value="1"/>
</dbReference>
<dbReference type="Pfam" id="PF01250">
    <property type="entry name" value="Ribosomal_S6"/>
    <property type="match status" value="1"/>
</dbReference>
<dbReference type="SUPFAM" id="SSF54995">
    <property type="entry name" value="Ribosomal protein S6"/>
    <property type="match status" value="1"/>
</dbReference>
<name>RS6_EXIS2</name>
<keyword id="KW-1185">Reference proteome</keyword>
<keyword id="KW-0687">Ribonucleoprotein</keyword>
<keyword id="KW-0689">Ribosomal protein</keyword>
<keyword id="KW-0694">RNA-binding</keyword>
<keyword id="KW-0699">rRNA-binding</keyword>
<sequence>MRKYEVLYIIRPEVDEEARKALVERFNKVLTDNGGTVEKTTEMGKRRFAYEINDMREGFYVLLNVTAEPAATKELDRLMKISDDIVRLMITKDEK</sequence>
<gene>
    <name evidence="1" type="primary">rpsF</name>
    <name type="ordered locus">Exig_3038</name>
</gene>
<reference key="1">
    <citation type="submission" date="2008-04" db="EMBL/GenBank/DDBJ databases">
        <title>Complete sequence of chromosome of Exiguobacterium sibiricum 255-15.</title>
        <authorList>
            <consortium name="US DOE Joint Genome Institute"/>
            <person name="Copeland A."/>
            <person name="Lucas S."/>
            <person name="Lapidus A."/>
            <person name="Glavina del Rio T."/>
            <person name="Dalin E."/>
            <person name="Tice H."/>
            <person name="Bruce D."/>
            <person name="Goodwin L."/>
            <person name="Pitluck S."/>
            <person name="Kiss H."/>
            <person name="Chertkov O."/>
            <person name="Monk C."/>
            <person name="Brettin T."/>
            <person name="Detter J.C."/>
            <person name="Han C."/>
            <person name="Kuske C.R."/>
            <person name="Schmutz J."/>
            <person name="Larimer F."/>
            <person name="Land M."/>
            <person name="Hauser L."/>
            <person name="Kyrpides N."/>
            <person name="Mikhailova N."/>
            <person name="Vishnivetskaya T."/>
            <person name="Rodrigues D.F."/>
            <person name="Gilichinsky D."/>
            <person name="Tiedje J."/>
            <person name="Richardson P."/>
        </authorList>
    </citation>
    <scope>NUCLEOTIDE SEQUENCE [LARGE SCALE GENOMIC DNA]</scope>
    <source>
        <strain>DSM 17290 / CCUG 55495 / CIP 109462 / JCM 13490 / 255-15</strain>
    </source>
</reference>
<accession>B1YG99</accession>
<proteinExistence type="inferred from homology"/>
<feature type="chain" id="PRO_1000120754" description="Small ribosomal subunit protein bS6">
    <location>
        <begin position="1"/>
        <end position="95"/>
    </location>
</feature>